<accession>A1JKQ1</accession>
<proteinExistence type="inferred from homology"/>
<organism>
    <name type="scientific">Yersinia enterocolitica serotype O:8 / biotype 1B (strain NCTC 13174 / 8081)</name>
    <dbReference type="NCBI Taxonomy" id="393305"/>
    <lineage>
        <taxon>Bacteria</taxon>
        <taxon>Pseudomonadati</taxon>
        <taxon>Pseudomonadota</taxon>
        <taxon>Gammaproteobacteria</taxon>
        <taxon>Enterobacterales</taxon>
        <taxon>Yersiniaceae</taxon>
        <taxon>Yersinia</taxon>
    </lineage>
</organism>
<dbReference type="EMBL" id="AM286415">
    <property type="protein sequence ID" value="CAL11153.1"/>
    <property type="molecule type" value="Genomic_DNA"/>
</dbReference>
<dbReference type="RefSeq" id="WP_004707916.1">
    <property type="nucleotide sequence ID" value="NC_008800.1"/>
</dbReference>
<dbReference type="RefSeq" id="YP_001005388.1">
    <property type="nucleotide sequence ID" value="NC_008800.1"/>
</dbReference>
<dbReference type="SMR" id="A1JKQ1"/>
<dbReference type="GeneID" id="97455096"/>
<dbReference type="KEGG" id="yen:YE1056"/>
<dbReference type="PATRIC" id="fig|393305.7.peg.1152"/>
<dbReference type="eggNOG" id="COG1959">
    <property type="taxonomic scope" value="Bacteria"/>
</dbReference>
<dbReference type="HOGENOM" id="CLU_107144_0_0_6"/>
<dbReference type="OrthoDB" id="9808360at2"/>
<dbReference type="Proteomes" id="UP000000642">
    <property type="component" value="Chromosome"/>
</dbReference>
<dbReference type="GO" id="GO:0005829">
    <property type="term" value="C:cytosol"/>
    <property type="evidence" value="ECO:0007669"/>
    <property type="project" value="TreeGrafter"/>
</dbReference>
<dbReference type="GO" id="GO:0051537">
    <property type="term" value="F:2 iron, 2 sulfur cluster binding"/>
    <property type="evidence" value="ECO:0007669"/>
    <property type="project" value="UniProtKB-KW"/>
</dbReference>
<dbReference type="GO" id="GO:0003700">
    <property type="term" value="F:DNA-binding transcription factor activity"/>
    <property type="evidence" value="ECO:0007669"/>
    <property type="project" value="UniProtKB-UniRule"/>
</dbReference>
<dbReference type="GO" id="GO:0003690">
    <property type="term" value="F:double-stranded DNA binding"/>
    <property type="evidence" value="ECO:0007669"/>
    <property type="project" value="UniProtKB-UniRule"/>
</dbReference>
<dbReference type="GO" id="GO:0005506">
    <property type="term" value="F:iron ion binding"/>
    <property type="evidence" value="ECO:0007669"/>
    <property type="project" value="UniProtKB-UniRule"/>
</dbReference>
<dbReference type="FunFam" id="1.10.10.10:FF:000026">
    <property type="entry name" value="HTH-type transcriptional regulator IscR"/>
    <property type="match status" value="1"/>
</dbReference>
<dbReference type="Gene3D" id="1.10.10.10">
    <property type="entry name" value="Winged helix-like DNA-binding domain superfamily/Winged helix DNA-binding domain"/>
    <property type="match status" value="1"/>
</dbReference>
<dbReference type="HAMAP" id="MF_01176">
    <property type="entry name" value="HTH_type_IscR"/>
    <property type="match status" value="1"/>
</dbReference>
<dbReference type="InterPro" id="IPR010242">
    <property type="entry name" value="TF_HTH_IscR"/>
</dbReference>
<dbReference type="InterPro" id="IPR030489">
    <property type="entry name" value="TR_Rrf2-type_CS"/>
</dbReference>
<dbReference type="InterPro" id="IPR000944">
    <property type="entry name" value="Tscrpt_reg_Rrf2"/>
</dbReference>
<dbReference type="InterPro" id="IPR036388">
    <property type="entry name" value="WH-like_DNA-bd_sf"/>
</dbReference>
<dbReference type="InterPro" id="IPR036390">
    <property type="entry name" value="WH_DNA-bd_sf"/>
</dbReference>
<dbReference type="NCBIfam" id="TIGR02010">
    <property type="entry name" value="IscR"/>
    <property type="match status" value="1"/>
</dbReference>
<dbReference type="NCBIfam" id="NF008110">
    <property type="entry name" value="PRK10857.1"/>
    <property type="match status" value="1"/>
</dbReference>
<dbReference type="NCBIfam" id="TIGR00738">
    <property type="entry name" value="rrf2_super"/>
    <property type="match status" value="1"/>
</dbReference>
<dbReference type="PANTHER" id="PTHR33221:SF5">
    <property type="entry name" value="HTH-TYPE TRANSCRIPTIONAL REGULATOR ISCR"/>
    <property type="match status" value="1"/>
</dbReference>
<dbReference type="PANTHER" id="PTHR33221">
    <property type="entry name" value="WINGED HELIX-TURN-HELIX TRANSCRIPTIONAL REGULATOR, RRF2 FAMILY"/>
    <property type="match status" value="1"/>
</dbReference>
<dbReference type="Pfam" id="PF02082">
    <property type="entry name" value="Rrf2"/>
    <property type="match status" value="1"/>
</dbReference>
<dbReference type="SUPFAM" id="SSF46785">
    <property type="entry name" value="Winged helix' DNA-binding domain"/>
    <property type="match status" value="1"/>
</dbReference>
<dbReference type="PROSITE" id="PS01332">
    <property type="entry name" value="HTH_RRF2_1"/>
    <property type="match status" value="1"/>
</dbReference>
<dbReference type="PROSITE" id="PS51197">
    <property type="entry name" value="HTH_RRF2_2"/>
    <property type="match status" value="1"/>
</dbReference>
<feature type="chain" id="PRO_1000085427" description="HTH-type transcriptional regulator IscR">
    <location>
        <begin position="1"/>
        <end position="164"/>
    </location>
</feature>
<feature type="domain" description="HTH rrf2-type" evidence="1">
    <location>
        <begin position="2"/>
        <end position="131"/>
    </location>
</feature>
<feature type="DNA-binding region" description="H-T-H motif" evidence="1">
    <location>
        <begin position="28"/>
        <end position="51"/>
    </location>
</feature>
<feature type="region of interest" description="Disordered" evidence="2">
    <location>
        <begin position="143"/>
        <end position="164"/>
    </location>
</feature>
<feature type="compositionally biased region" description="Polar residues" evidence="2">
    <location>
        <begin position="152"/>
        <end position="164"/>
    </location>
</feature>
<feature type="binding site" evidence="1">
    <location>
        <position position="92"/>
    </location>
    <ligand>
        <name>[2Fe-2S] cluster</name>
        <dbReference type="ChEBI" id="CHEBI:190135"/>
    </ligand>
</feature>
<feature type="binding site" evidence="1">
    <location>
        <position position="98"/>
    </location>
    <ligand>
        <name>[2Fe-2S] cluster</name>
        <dbReference type="ChEBI" id="CHEBI:190135"/>
    </ligand>
</feature>
<feature type="binding site" evidence="1">
    <location>
        <position position="104"/>
    </location>
    <ligand>
        <name>[2Fe-2S] cluster</name>
        <dbReference type="ChEBI" id="CHEBI:190135"/>
    </ligand>
</feature>
<reference key="1">
    <citation type="journal article" date="2006" name="PLoS Genet.">
        <title>The complete genome sequence and comparative genome analysis of the high pathogenicity Yersinia enterocolitica strain 8081.</title>
        <authorList>
            <person name="Thomson N.R."/>
            <person name="Howard S."/>
            <person name="Wren B.W."/>
            <person name="Holden M.T.G."/>
            <person name="Crossman L."/>
            <person name="Challis G.L."/>
            <person name="Churcher C."/>
            <person name="Mungall K."/>
            <person name="Brooks K."/>
            <person name="Chillingworth T."/>
            <person name="Feltwell T."/>
            <person name="Abdellah Z."/>
            <person name="Hauser H."/>
            <person name="Jagels K."/>
            <person name="Maddison M."/>
            <person name="Moule S."/>
            <person name="Sanders M."/>
            <person name="Whitehead S."/>
            <person name="Quail M.A."/>
            <person name="Dougan G."/>
            <person name="Parkhill J."/>
            <person name="Prentice M.B."/>
        </authorList>
    </citation>
    <scope>NUCLEOTIDE SEQUENCE [LARGE SCALE GENOMIC DNA]</scope>
    <source>
        <strain>NCTC 13174 / 8081</strain>
    </source>
</reference>
<keyword id="KW-0001">2Fe-2S</keyword>
<keyword id="KW-0010">Activator</keyword>
<keyword id="KW-0238">DNA-binding</keyword>
<keyword id="KW-0408">Iron</keyword>
<keyword id="KW-0411">Iron-sulfur</keyword>
<keyword id="KW-0479">Metal-binding</keyword>
<keyword id="KW-0678">Repressor</keyword>
<keyword id="KW-0804">Transcription</keyword>
<keyword id="KW-0805">Transcription regulation</keyword>
<sequence>MRLTSKGRYAVTAMLDVALHSQDGPVPLADISERQGISLSYLEQLFSRLRKNGLVASVRGPGGGYLLGKDASAIAVGAVITAVDESVDATRCQGKEGCQGGDRCLTHTLWRDLSERISSFLNNITLAELVNNQDILEVADRQNNDTRRTANGRPQETINVNLRA</sequence>
<protein>
    <recommendedName>
        <fullName evidence="1">HTH-type transcriptional regulator IscR</fullName>
    </recommendedName>
</protein>
<evidence type="ECO:0000255" key="1">
    <source>
        <dbReference type="HAMAP-Rule" id="MF_01176"/>
    </source>
</evidence>
<evidence type="ECO:0000256" key="2">
    <source>
        <dbReference type="SAM" id="MobiDB-lite"/>
    </source>
</evidence>
<name>ISCR_YERE8</name>
<gene>
    <name evidence="1" type="primary">iscR</name>
    <name type="ordered locus">YE1056</name>
</gene>
<comment type="function">
    <text evidence="1">Regulates the transcription of several operons and genes involved in the biogenesis of Fe-S clusters and Fe-S-containing proteins.</text>
</comment>
<comment type="cofactor">
    <cofactor evidence="1">
        <name>[2Fe-2S] cluster</name>
        <dbReference type="ChEBI" id="CHEBI:190135"/>
    </cofactor>
    <text evidence="1">Binds 1 [2Fe-2S] cluster.</text>
</comment>